<organism>
    <name type="scientific">Ectopseudomonas mendocina (strain ymp)</name>
    <name type="common">Pseudomonas mendocina</name>
    <dbReference type="NCBI Taxonomy" id="399739"/>
    <lineage>
        <taxon>Bacteria</taxon>
        <taxon>Pseudomonadati</taxon>
        <taxon>Pseudomonadota</taxon>
        <taxon>Gammaproteobacteria</taxon>
        <taxon>Pseudomonadales</taxon>
        <taxon>Pseudomonadaceae</taxon>
        <taxon>Ectopseudomonas</taxon>
    </lineage>
</organism>
<accession>A4XT11</accession>
<feature type="chain" id="PRO_0000374947" description="Ribosomal protein uS12 methylthiotransferase RimO">
    <location>
        <begin position="1"/>
        <end position="440"/>
    </location>
</feature>
<feature type="domain" description="MTTase N-terminal" evidence="1">
    <location>
        <begin position="6"/>
        <end position="116"/>
    </location>
</feature>
<feature type="domain" description="Radical SAM core" evidence="2">
    <location>
        <begin position="135"/>
        <end position="374"/>
    </location>
</feature>
<feature type="domain" description="TRAM" evidence="1">
    <location>
        <begin position="376"/>
        <end position="440"/>
    </location>
</feature>
<feature type="binding site" evidence="1">
    <location>
        <position position="15"/>
    </location>
    <ligand>
        <name>[4Fe-4S] cluster</name>
        <dbReference type="ChEBI" id="CHEBI:49883"/>
        <label>1</label>
    </ligand>
</feature>
<feature type="binding site" evidence="1">
    <location>
        <position position="51"/>
    </location>
    <ligand>
        <name>[4Fe-4S] cluster</name>
        <dbReference type="ChEBI" id="CHEBI:49883"/>
        <label>1</label>
    </ligand>
</feature>
<feature type="binding site" evidence="1">
    <location>
        <position position="80"/>
    </location>
    <ligand>
        <name>[4Fe-4S] cluster</name>
        <dbReference type="ChEBI" id="CHEBI:49883"/>
        <label>1</label>
    </ligand>
</feature>
<feature type="binding site" evidence="1">
    <location>
        <position position="149"/>
    </location>
    <ligand>
        <name>[4Fe-4S] cluster</name>
        <dbReference type="ChEBI" id="CHEBI:49883"/>
        <label>2</label>
        <note>4Fe-4S-S-AdoMet</note>
    </ligand>
</feature>
<feature type="binding site" evidence="1">
    <location>
        <position position="153"/>
    </location>
    <ligand>
        <name>[4Fe-4S] cluster</name>
        <dbReference type="ChEBI" id="CHEBI:49883"/>
        <label>2</label>
        <note>4Fe-4S-S-AdoMet</note>
    </ligand>
</feature>
<feature type="binding site" evidence="1">
    <location>
        <position position="156"/>
    </location>
    <ligand>
        <name>[4Fe-4S] cluster</name>
        <dbReference type="ChEBI" id="CHEBI:49883"/>
        <label>2</label>
        <note>4Fe-4S-S-AdoMet</note>
    </ligand>
</feature>
<gene>
    <name evidence="1" type="primary">rimO</name>
    <name type="ordered locus">Pmen_1713</name>
</gene>
<reference key="1">
    <citation type="submission" date="2007-04" db="EMBL/GenBank/DDBJ databases">
        <title>Complete sequence of Pseudomonas mendocina ymp.</title>
        <authorList>
            <consortium name="US DOE Joint Genome Institute"/>
            <person name="Copeland A."/>
            <person name="Lucas S."/>
            <person name="Lapidus A."/>
            <person name="Barry K."/>
            <person name="Glavina del Rio T."/>
            <person name="Dalin E."/>
            <person name="Tice H."/>
            <person name="Pitluck S."/>
            <person name="Kiss H."/>
            <person name="Brettin T."/>
            <person name="Detter J.C."/>
            <person name="Bruce D."/>
            <person name="Han C."/>
            <person name="Schmutz J."/>
            <person name="Larimer F."/>
            <person name="Land M."/>
            <person name="Hauser L."/>
            <person name="Kyrpides N."/>
            <person name="Mikhailova N."/>
            <person name="Hersman L."/>
            <person name="Dubois J."/>
            <person name="Maurice P."/>
            <person name="Richardson P."/>
        </authorList>
    </citation>
    <scope>NUCLEOTIDE SEQUENCE [LARGE SCALE GENOMIC DNA]</scope>
    <source>
        <strain>ymp</strain>
    </source>
</reference>
<proteinExistence type="inferred from homology"/>
<name>RIMO_ECTM1</name>
<dbReference type="EC" id="2.8.4.4" evidence="1"/>
<dbReference type="EMBL" id="CP000680">
    <property type="protein sequence ID" value="ABP84477.1"/>
    <property type="molecule type" value="Genomic_DNA"/>
</dbReference>
<dbReference type="SMR" id="A4XT11"/>
<dbReference type="STRING" id="399739.Pmen_1713"/>
<dbReference type="KEGG" id="pmy:Pmen_1713"/>
<dbReference type="PATRIC" id="fig|399739.8.peg.1737"/>
<dbReference type="eggNOG" id="COG0621">
    <property type="taxonomic scope" value="Bacteria"/>
</dbReference>
<dbReference type="HOGENOM" id="CLU_018697_0_0_6"/>
<dbReference type="OrthoDB" id="9805215at2"/>
<dbReference type="GO" id="GO:0005829">
    <property type="term" value="C:cytosol"/>
    <property type="evidence" value="ECO:0007669"/>
    <property type="project" value="TreeGrafter"/>
</dbReference>
<dbReference type="GO" id="GO:0051539">
    <property type="term" value="F:4 iron, 4 sulfur cluster binding"/>
    <property type="evidence" value="ECO:0007669"/>
    <property type="project" value="UniProtKB-UniRule"/>
</dbReference>
<dbReference type="GO" id="GO:0035599">
    <property type="term" value="F:aspartic acid methylthiotransferase activity"/>
    <property type="evidence" value="ECO:0007669"/>
    <property type="project" value="TreeGrafter"/>
</dbReference>
<dbReference type="GO" id="GO:0046872">
    <property type="term" value="F:metal ion binding"/>
    <property type="evidence" value="ECO:0007669"/>
    <property type="project" value="UniProtKB-KW"/>
</dbReference>
<dbReference type="GO" id="GO:0103039">
    <property type="term" value="F:protein methylthiotransferase activity"/>
    <property type="evidence" value="ECO:0007669"/>
    <property type="project" value="UniProtKB-EC"/>
</dbReference>
<dbReference type="GO" id="GO:0006400">
    <property type="term" value="P:tRNA modification"/>
    <property type="evidence" value="ECO:0007669"/>
    <property type="project" value="InterPro"/>
</dbReference>
<dbReference type="CDD" id="cd01335">
    <property type="entry name" value="Radical_SAM"/>
    <property type="match status" value="1"/>
</dbReference>
<dbReference type="FunFam" id="2.40.50.140:FF:000060">
    <property type="entry name" value="Ribosomal protein S12 methylthiotransferase RimO"/>
    <property type="match status" value="1"/>
</dbReference>
<dbReference type="FunFam" id="3.40.50.12160:FF:000002">
    <property type="entry name" value="Ribosomal protein S12 methylthiotransferase RimO"/>
    <property type="match status" value="1"/>
</dbReference>
<dbReference type="FunFam" id="3.80.30.20:FF:000001">
    <property type="entry name" value="tRNA-2-methylthio-N(6)-dimethylallyladenosine synthase 2"/>
    <property type="match status" value="1"/>
</dbReference>
<dbReference type="Gene3D" id="3.40.50.12160">
    <property type="entry name" value="Methylthiotransferase, N-terminal domain"/>
    <property type="match status" value="1"/>
</dbReference>
<dbReference type="Gene3D" id="2.40.50.140">
    <property type="entry name" value="Nucleic acid-binding proteins"/>
    <property type="match status" value="1"/>
</dbReference>
<dbReference type="Gene3D" id="3.80.30.20">
    <property type="entry name" value="tm_1862 like domain"/>
    <property type="match status" value="1"/>
</dbReference>
<dbReference type="HAMAP" id="MF_01865">
    <property type="entry name" value="MTTase_RimO"/>
    <property type="match status" value="1"/>
</dbReference>
<dbReference type="InterPro" id="IPR006638">
    <property type="entry name" value="Elp3/MiaA/NifB-like_rSAM"/>
</dbReference>
<dbReference type="InterPro" id="IPR005839">
    <property type="entry name" value="Methylthiotransferase"/>
</dbReference>
<dbReference type="InterPro" id="IPR020612">
    <property type="entry name" value="Methylthiotransferase_CS"/>
</dbReference>
<dbReference type="InterPro" id="IPR013848">
    <property type="entry name" value="Methylthiotransferase_N"/>
</dbReference>
<dbReference type="InterPro" id="IPR038135">
    <property type="entry name" value="Methylthiotransferase_N_sf"/>
</dbReference>
<dbReference type="InterPro" id="IPR012340">
    <property type="entry name" value="NA-bd_OB-fold"/>
</dbReference>
<dbReference type="InterPro" id="IPR005840">
    <property type="entry name" value="Ribosomal_uS12_MeSTrfase_RimO"/>
</dbReference>
<dbReference type="InterPro" id="IPR007197">
    <property type="entry name" value="rSAM"/>
</dbReference>
<dbReference type="InterPro" id="IPR023404">
    <property type="entry name" value="rSAM_horseshoe"/>
</dbReference>
<dbReference type="InterPro" id="IPR002792">
    <property type="entry name" value="TRAM_dom"/>
</dbReference>
<dbReference type="NCBIfam" id="TIGR01125">
    <property type="entry name" value="30S ribosomal protein S12 methylthiotransferase RimO"/>
    <property type="match status" value="1"/>
</dbReference>
<dbReference type="NCBIfam" id="TIGR00089">
    <property type="entry name" value="MiaB/RimO family radical SAM methylthiotransferase"/>
    <property type="match status" value="1"/>
</dbReference>
<dbReference type="PANTHER" id="PTHR43837">
    <property type="entry name" value="RIBOSOMAL PROTEIN S12 METHYLTHIOTRANSFERASE RIMO"/>
    <property type="match status" value="1"/>
</dbReference>
<dbReference type="PANTHER" id="PTHR43837:SF1">
    <property type="entry name" value="RIBOSOMAL PROTEIN US12 METHYLTHIOTRANSFERASE RIMO"/>
    <property type="match status" value="1"/>
</dbReference>
<dbReference type="Pfam" id="PF04055">
    <property type="entry name" value="Radical_SAM"/>
    <property type="match status" value="1"/>
</dbReference>
<dbReference type="Pfam" id="PF18693">
    <property type="entry name" value="TRAM_2"/>
    <property type="match status" value="1"/>
</dbReference>
<dbReference type="Pfam" id="PF00919">
    <property type="entry name" value="UPF0004"/>
    <property type="match status" value="1"/>
</dbReference>
<dbReference type="SFLD" id="SFLDG01082">
    <property type="entry name" value="B12-binding_domain_containing"/>
    <property type="match status" value="1"/>
</dbReference>
<dbReference type="SFLD" id="SFLDS00029">
    <property type="entry name" value="Radical_SAM"/>
    <property type="match status" value="1"/>
</dbReference>
<dbReference type="SFLD" id="SFLDF00274">
    <property type="entry name" value="ribosomal_protein_S12_methylth"/>
    <property type="match status" value="1"/>
</dbReference>
<dbReference type="SMART" id="SM00729">
    <property type="entry name" value="Elp3"/>
    <property type="match status" value="1"/>
</dbReference>
<dbReference type="SUPFAM" id="SSF102114">
    <property type="entry name" value="Radical SAM enzymes"/>
    <property type="match status" value="1"/>
</dbReference>
<dbReference type="PROSITE" id="PS51449">
    <property type="entry name" value="MTTASE_N"/>
    <property type="match status" value="1"/>
</dbReference>
<dbReference type="PROSITE" id="PS01278">
    <property type="entry name" value="MTTASE_RADICAL"/>
    <property type="match status" value="1"/>
</dbReference>
<dbReference type="PROSITE" id="PS51918">
    <property type="entry name" value="RADICAL_SAM"/>
    <property type="match status" value="1"/>
</dbReference>
<dbReference type="PROSITE" id="PS50926">
    <property type="entry name" value="TRAM"/>
    <property type="match status" value="1"/>
</dbReference>
<keyword id="KW-0004">4Fe-4S</keyword>
<keyword id="KW-0963">Cytoplasm</keyword>
<keyword id="KW-0408">Iron</keyword>
<keyword id="KW-0411">Iron-sulfur</keyword>
<keyword id="KW-0479">Metal-binding</keyword>
<keyword id="KW-0949">S-adenosyl-L-methionine</keyword>
<keyword id="KW-0808">Transferase</keyword>
<comment type="function">
    <text evidence="1">Catalyzes the methylthiolation of an aspartic acid residue of ribosomal protein uS12.</text>
</comment>
<comment type="catalytic activity">
    <reaction evidence="1">
        <text>L-aspartate(89)-[ribosomal protein uS12]-hydrogen + (sulfur carrier)-SH + AH2 + 2 S-adenosyl-L-methionine = 3-methylsulfanyl-L-aspartate(89)-[ribosomal protein uS12]-hydrogen + (sulfur carrier)-H + 5'-deoxyadenosine + L-methionine + A + S-adenosyl-L-homocysteine + 2 H(+)</text>
        <dbReference type="Rhea" id="RHEA:37087"/>
        <dbReference type="Rhea" id="RHEA-COMP:10460"/>
        <dbReference type="Rhea" id="RHEA-COMP:10461"/>
        <dbReference type="Rhea" id="RHEA-COMP:14737"/>
        <dbReference type="Rhea" id="RHEA-COMP:14739"/>
        <dbReference type="ChEBI" id="CHEBI:13193"/>
        <dbReference type="ChEBI" id="CHEBI:15378"/>
        <dbReference type="ChEBI" id="CHEBI:17319"/>
        <dbReference type="ChEBI" id="CHEBI:17499"/>
        <dbReference type="ChEBI" id="CHEBI:29917"/>
        <dbReference type="ChEBI" id="CHEBI:29961"/>
        <dbReference type="ChEBI" id="CHEBI:57844"/>
        <dbReference type="ChEBI" id="CHEBI:57856"/>
        <dbReference type="ChEBI" id="CHEBI:59789"/>
        <dbReference type="ChEBI" id="CHEBI:64428"/>
        <dbReference type="ChEBI" id="CHEBI:73599"/>
        <dbReference type="EC" id="2.8.4.4"/>
    </reaction>
</comment>
<comment type="cofactor">
    <cofactor evidence="1">
        <name>[4Fe-4S] cluster</name>
        <dbReference type="ChEBI" id="CHEBI:49883"/>
    </cofactor>
    <text evidence="1">Binds 2 [4Fe-4S] clusters. One cluster is coordinated with 3 cysteines and an exchangeable S-adenosyl-L-methionine.</text>
</comment>
<comment type="subcellular location">
    <subcellularLocation>
        <location evidence="1">Cytoplasm</location>
    </subcellularLocation>
</comment>
<comment type="similarity">
    <text evidence="1">Belongs to the methylthiotransferase family. RimO subfamily.</text>
</comment>
<sequence length="440" mass="48670">MSTATPKVGFVSLGCPKATVDSERILTQLRMEGYEIVPTYQDADVVVVNTCGFIDSAKAESLDAIGEAIAENGKVIVTGCMGVAEDSIRDVHPSVLAVTGPQQYEQVVSAVHEVVPPKTEHNPLIDLVPPQGIKLTPRHYAYLKISEGCNHSCSFCIIPSMRGKLVSRPVGDVLSEAERLVKAGVKELLVISQDTSAYGVDMKYKLDFWNGQPVKTRMLELCEALSSMGVWVRLHYVYPYPNVDDVIPLMAAGKLLPYLDIPFQHASPKVLKSMKRPAFEDKTLARIKKWREICPELTIRSTFIVGFPGETEEDFQYLLDWLTEAQLDRVGCFQYSPVEGAPANDLGLEPVPDDVKQERWERFMAHQQAISSARLQAKIGLEMDVLVDEVDGEGAVARSWADAPEIDGSVFIDSTAVKPGDKVRVRIVDADEYDMWGELV</sequence>
<protein>
    <recommendedName>
        <fullName evidence="1">Ribosomal protein uS12 methylthiotransferase RimO</fullName>
        <shortName evidence="1">uS12 MTTase</shortName>
        <shortName evidence="1">uS12 methylthiotransferase</shortName>
        <ecNumber evidence="1">2.8.4.4</ecNumber>
    </recommendedName>
    <alternativeName>
        <fullName evidence="1">Ribosomal protein uS12 (aspartate-C(3))-methylthiotransferase</fullName>
    </alternativeName>
    <alternativeName>
        <fullName evidence="1">Ribosome maturation factor RimO</fullName>
    </alternativeName>
</protein>
<evidence type="ECO:0000255" key="1">
    <source>
        <dbReference type="HAMAP-Rule" id="MF_01865"/>
    </source>
</evidence>
<evidence type="ECO:0000255" key="2">
    <source>
        <dbReference type="PROSITE-ProRule" id="PRU01266"/>
    </source>
</evidence>